<organism>
    <name type="scientific">Bacillus cereus (strain AH820)</name>
    <dbReference type="NCBI Taxonomy" id="405535"/>
    <lineage>
        <taxon>Bacteria</taxon>
        <taxon>Bacillati</taxon>
        <taxon>Bacillota</taxon>
        <taxon>Bacilli</taxon>
        <taxon>Bacillales</taxon>
        <taxon>Bacillaceae</taxon>
        <taxon>Bacillus</taxon>
        <taxon>Bacillus cereus group</taxon>
    </lineage>
</organism>
<dbReference type="EMBL" id="CP001283">
    <property type="protein sequence ID" value="ACK91395.1"/>
    <property type="molecule type" value="Genomic_DNA"/>
</dbReference>
<dbReference type="RefSeq" id="WP_000628817.1">
    <property type="nucleotide sequence ID" value="NC_011773.1"/>
</dbReference>
<dbReference type="KEGG" id="bcu:BCAH820_0138"/>
<dbReference type="HOGENOM" id="CLU_098841_0_1_9"/>
<dbReference type="Proteomes" id="UP000001363">
    <property type="component" value="Chromosome"/>
</dbReference>
<dbReference type="GO" id="GO:0022625">
    <property type="term" value="C:cytosolic large ribosomal subunit"/>
    <property type="evidence" value="ECO:0007669"/>
    <property type="project" value="TreeGrafter"/>
</dbReference>
<dbReference type="GO" id="GO:0008097">
    <property type="term" value="F:5S rRNA binding"/>
    <property type="evidence" value="ECO:0007669"/>
    <property type="project" value="TreeGrafter"/>
</dbReference>
<dbReference type="GO" id="GO:0003735">
    <property type="term" value="F:structural constituent of ribosome"/>
    <property type="evidence" value="ECO:0007669"/>
    <property type="project" value="InterPro"/>
</dbReference>
<dbReference type="GO" id="GO:0006412">
    <property type="term" value="P:translation"/>
    <property type="evidence" value="ECO:0007669"/>
    <property type="project" value="UniProtKB-UniRule"/>
</dbReference>
<dbReference type="CDD" id="cd00432">
    <property type="entry name" value="Ribosomal_L18_L5e"/>
    <property type="match status" value="1"/>
</dbReference>
<dbReference type="FunFam" id="3.30.420.100:FF:000001">
    <property type="entry name" value="50S ribosomal protein L18"/>
    <property type="match status" value="1"/>
</dbReference>
<dbReference type="Gene3D" id="3.30.420.100">
    <property type="match status" value="1"/>
</dbReference>
<dbReference type="HAMAP" id="MF_01337_B">
    <property type="entry name" value="Ribosomal_uL18_B"/>
    <property type="match status" value="1"/>
</dbReference>
<dbReference type="InterPro" id="IPR004389">
    <property type="entry name" value="Ribosomal_uL18_bac-type"/>
</dbReference>
<dbReference type="InterPro" id="IPR005484">
    <property type="entry name" value="Ribosomal_uL18_bac/euk"/>
</dbReference>
<dbReference type="NCBIfam" id="TIGR00060">
    <property type="entry name" value="L18_bact"/>
    <property type="match status" value="1"/>
</dbReference>
<dbReference type="PANTHER" id="PTHR12899">
    <property type="entry name" value="39S RIBOSOMAL PROTEIN L18, MITOCHONDRIAL"/>
    <property type="match status" value="1"/>
</dbReference>
<dbReference type="PANTHER" id="PTHR12899:SF3">
    <property type="entry name" value="LARGE RIBOSOMAL SUBUNIT PROTEIN UL18M"/>
    <property type="match status" value="1"/>
</dbReference>
<dbReference type="Pfam" id="PF00861">
    <property type="entry name" value="Ribosomal_L18p"/>
    <property type="match status" value="1"/>
</dbReference>
<dbReference type="SUPFAM" id="SSF53137">
    <property type="entry name" value="Translational machinery components"/>
    <property type="match status" value="1"/>
</dbReference>
<accession>B7JKD5</accession>
<comment type="function">
    <text evidence="1">This is one of the proteins that bind and probably mediate the attachment of the 5S RNA into the large ribosomal subunit, where it forms part of the central protuberance.</text>
</comment>
<comment type="subunit">
    <text evidence="1">Part of the 50S ribosomal subunit; part of the 5S rRNA/L5/L18/L25 subcomplex. Contacts the 5S and 23S rRNAs.</text>
</comment>
<comment type="similarity">
    <text evidence="1">Belongs to the universal ribosomal protein uL18 family.</text>
</comment>
<gene>
    <name evidence="1" type="primary">rplR</name>
    <name type="ordered locus">BCAH820_0138</name>
</gene>
<feature type="chain" id="PRO_1000142616" description="Large ribosomal subunit protein uL18">
    <location>
        <begin position="1"/>
        <end position="120"/>
    </location>
</feature>
<evidence type="ECO:0000255" key="1">
    <source>
        <dbReference type="HAMAP-Rule" id="MF_01337"/>
    </source>
</evidence>
<evidence type="ECO:0000305" key="2"/>
<keyword id="KW-0687">Ribonucleoprotein</keyword>
<keyword id="KW-0689">Ribosomal protein</keyword>
<keyword id="KW-0694">RNA-binding</keyword>
<keyword id="KW-0699">rRNA-binding</keyword>
<sequence length="120" mass="13089">MITKADKNATRKKRHARVRAKLTGTAERPRLNVFRSNQHIYAQVIDDVNGVTLVSASTLDKDLALNGTSNIEAATKVGESVAKRAVEXGVKEVVFDRGGYLYHGRVKALAEAAREAGLQF</sequence>
<proteinExistence type="inferred from homology"/>
<name>RL18_BACC0</name>
<reference key="1">
    <citation type="submission" date="2008-10" db="EMBL/GenBank/DDBJ databases">
        <title>Genome sequence of Bacillus cereus AH820.</title>
        <authorList>
            <person name="Dodson R.J."/>
            <person name="Durkin A.S."/>
            <person name="Rosovitz M.J."/>
            <person name="Rasko D.A."/>
            <person name="Hoffmaster A."/>
            <person name="Ravel J."/>
            <person name="Sutton G."/>
        </authorList>
    </citation>
    <scope>NUCLEOTIDE SEQUENCE [LARGE SCALE GENOMIC DNA]</scope>
    <source>
        <strain>AH820</strain>
    </source>
</reference>
<protein>
    <recommendedName>
        <fullName evidence="1">Large ribosomal subunit protein uL18</fullName>
    </recommendedName>
    <alternativeName>
        <fullName evidence="2">50S ribosomal protein L18</fullName>
    </alternativeName>
</protein>